<reference key="1">
    <citation type="journal article" date="2007" name="PLoS Biol.">
        <title>Evolution of symbiotic bacteria in the distal human intestine.</title>
        <authorList>
            <person name="Xu J."/>
            <person name="Mahowald M.A."/>
            <person name="Ley R.E."/>
            <person name="Lozupone C.A."/>
            <person name="Hamady M."/>
            <person name="Martens E.C."/>
            <person name="Henrissat B."/>
            <person name="Coutinho P.M."/>
            <person name="Minx P."/>
            <person name="Latreille P."/>
            <person name="Cordum H."/>
            <person name="Van Brunt A."/>
            <person name="Kim K."/>
            <person name="Fulton R.S."/>
            <person name="Fulton L.A."/>
            <person name="Clifton S.W."/>
            <person name="Wilson R.K."/>
            <person name="Knight R.D."/>
            <person name="Gordon J.I."/>
        </authorList>
    </citation>
    <scope>NUCLEOTIDE SEQUENCE [LARGE SCALE GENOMIC DNA]</scope>
    <source>
        <strain>ATCC 8482 / DSM 1447 / JCM 5826 / CCUG 4940 / NBRC 14291 / NCTC 11154</strain>
    </source>
</reference>
<reference key="2">
    <citation type="journal article" date="2015" name="Proc. Natl. Acad. Sci. U.S.A.">
        <title>Functional metagenomic discovery of bacterial effectors in the human microbiome and isolation of commendamide, a GPCR G2A/132 agonist.</title>
        <authorList>
            <person name="Cohen L.J."/>
            <person name="Kang H.S."/>
            <person name="Chu J."/>
            <person name="Huang Y.H."/>
            <person name="Gordon E.A."/>
            <person name="Reddy B.V."/>
            <person name="Ternei M.A."/>
            <person name="Craig J.W."/>
            <person name="Brady S.F."/>
        </authorList>
    </citation>
    <scope>FUNCTION</scope>
    <source>
        <strain>ATCC 8482 / DSM 1447 / JCM 5826 / CCUG 4940 / NBRC 14291 / NCTC 11154</strain>
    </source>
</reference>
<reference key="3">
    <citation type="journal article" date="2017" name="Sci. Rep.">
        <title>The Bacteroidales produce an N-acylated derivative of glycine with both cholesterol-solubilising and hemolytic activity.</title>
        <authorList>
            <person name="Lynch A."/>
            <person name="Crowley E."/>
            <person name="Casey E."/>
            <person name="Cano R."/>
            <person name="Shanahan R."/>
            <person name="McGlacken G."/>
            <person name="Marchesi J.R."/>
            <person name="Clarke D.J."/>
        </authorList>
    </citation>
    <scope>FUNCTION</scope>
    <scope>PATHWAY</scope>
    <scope>MUTAGENESIS OF GLU-136 AND ARG-139</scope>
    <source>
        <strain>ATCC 8482 / DSM 1447 / JCM 5826 / CCUG 4940 / NBRC 14291 / NCTC 11154</strain>
    </source>
</reference>
<reference key="4">
    <citation type="journal article" date="2019" name="Appl. Environ. Microbiol.">
        <title>The Glycine Lipids of Bacteroides thetaiotaomicron Are Important for Fitness during Growth In Vivo and In Vitro.</title>
        <authorList>
            <person name="Lynch A."/>
            <person name="Tammireddy S.R."/>
            <person name="Doherty M.K."/>
            <person name="Whitfield P.D."/>
            <person name="Clarke D.J."/>
        </authorList>
    </citation>
    <scope>FUNCTION</scope>
    <scope>PATHWAY</scope>
    <source>
        <strain>ATCC 8482 / DSM 1447 / JCM 5826 / CCUG 4940 / NBRC 14291 / NCTC 11154</strain>
    </source>
</reference>
<sequence>MEEIIAPISKEILKAELSEDKRLRFTNKSHNEIYVITYQDSPNVMKEIGRLREIAFRAAGGGTGKAMDIDEYDVMENPYKQLVVWNPEAEEILGGYRYLLGDEVQFDEHGKPVLATAHMFNFSEVFLKEYLPYTVELGRSFVTLEYQSTRAGSKGLFALDNLWDGLGALTVIKPNVKYFFGKMTMYPSYHRQGRDMILYFLNKHFGDKDKLITPMKPLEIETDKKMLENLFCYDSFKEDYKILNTEVRKLGYNIPPLVNAYMSLSPTMRMFGTAINYGFGDVEETGILIAVNEILEDKRVRHIESFVKQHPEAMKITSGAHPILTK</sequence>
<accession>A6L081</accession>
<name>GLSB_PHOV8</name>
<feature type="chain" id="PRO_0000461301" description="Glycine N(alpha)-acyltransferase">
    <location>
        <begin position="1"/>
        <end position="326"/>
    </location>
</feature>
<feature type="mutagenesis site" description="Loss of commendamide production." evidence="2">
    <original>E</original>
    <variation>A</variation>
    <location>
        <position position="136"/>
    </location>
</feature>
<feature type="mutagenesis site" description="Loss of commendamide production." evidence="2">
    <original>R</original>
    <variation>A</variation>
    <location>
        <position position="139"/>
    </location>
</feature>
<proteinExistence type="evidence at protein level"/>
<organism>
    <name type="scientific">Phocaeicola vulgatus (strain ATCC 8482 / DSM 1447 / JCM 5826 / CCUG 4940 / NBRC 14291 / NCTC 11154)</name>
    <name type="common">Bacteroides vulgatus</name>
    <dbReference type="NCBI Taxonomy" id="435590"/>
    <lineage>
        <taxon>Bacteria</taxon>
        <taxon>Pseudomonadati</taxon>
        <taxon>Bacteroidota</taxon>
        <taxon>Bacteroidia</taxon>
        <taxon>Bacteroidales</taxon>
        <taxon>Bacteroidaceae</taxon>
        <taxon>Phocaeicola</taxon>
    </lineage>
</organism>
<gene>
    <name evidence="6" type="primary">glsB</name>
    <name evidence="4" type="synonym">Cbeg12</name>
    <name evidence="5 6" type="synonym">choA</name>
    <name evidence="10" type="ordered locus">BVU_1407</name>
</gene>
<comment type="function">
    <text evidence="1 2 3">Is involved in the production of glycine lipids (GL), which are phosphorus-free membrane lipids. Catalyzes the first step of GL biosynthesis, i.e. the N-acylation of glycine via addition of a 3-hydroxy fatty acyl group, to form a range of monoacylated glycine (also named lyso-glycine lipids or lyso-GL). As an example, catalyzes the production of commendamide, an N-acylated (3-OH C16:0) derivative of glycine with hemolytic activity and the ability to solubilize cholesterol micelles; this compound can also activate NF-kB through the G-protein coupled receptor GPCR G2A/132.</text>
</comment>
<comment type="catalytic activity">
    <reaction evidence="8 9">
        <text>a (3R)-hydroxyacyl-[ACP] + glycine = a lyso-glycine lipid + holo-[ACP] + H(+)</text>
        <dbReference type="Rhea" id="RHEA:80947"/>
        <dbReference type="Rhea" id="RHEA-COMP:9685"/>
        <dbReference type="Rhea" id="RHEA-COMP:9945"/>
        <dbReference type="ChEBI" id="CHEBI:15378"/>
        <dbReference type="ChEBI" id="CHEBI:57305"/>
        <dbReference type="ChEBI" id="CHEBI:64479"/>
        <dbReference type="ChEBI" id="CHEBI:78827"/>
        <dbReference type="ChEBI" id="CHEBI:231742"/>
    </reaction>
    <physiologicalReaction direction="left-to-right" evidence="3">
        <dbReference type="Rhea" id="RHEA:80948"/>
    </physiologicalReaction>
</comment>
<comment type="catalytic activity">
    <reaction evidence="8 9">
        <text>(3R)-hydroxyhexadecanoyl-[ACP] + glycine = N-[(3R)-3-hydroxyhexadecanoyl]-glycine + holo-[ACP] + H(+)</text>
        <dbReference type="Rhea" id="RHEA:80955"/>
        <dbReference type="Rhea" id="RHEA-COMP:9650"/>
        <dbReference type="Rhea" id="RHEA-COMP:9685"/>
        <dbReference type="ChEBI" id="CHEBI:15378"/>
        <dbReference type="ChEBI" id="CHEBI:57305"/>
        <dbReference type="ChEBI" id="CHEBI:64479"/>
        <dbReference type="ChEBI" id="CHEBI:78480"/>
        <dbReference type="ChEBI" id="CHEBI:231743"/>
    </reaction>
    <physiologicalReaction direction="left-to-right" evidence="3">
        <dbReference type="Rhea" id="RHEA:80956"/>
    </physiologicalReaction>
</comment>
<comment type="pathway">
    <text evidence="2 3">Lipid metabolism.</text>
</comment>
<comment type="similarity">
    <text evidence="7">Belongs to the acetyltransferase family.</text>
</comment>
<dbReference type="EC" id="2.3.2.-" evidence="9"/>
<dbReference type="EMBL" id="CP000139">
    <property type="protein sequence ID" value="ABR39095.1"/>
    <property type="molecule type" value="Genomic_DNA"/>
</dbReference>
<dbReference type="RefSeq" id="WP_005845337.1">
    <property type="nucleotide sequence ID" value="NZ_JANSWM010000067.1"/>
</dbReference>
<dbReference type="STRING" id="435590.BVU_1407"/>
<dbReference type="PaxDb" id="435590-BVU_1407"/>
<dbReference type="GeneID" id="5302373"/>
<dbReference type="KEGG" id="bvu:BVU_1407"/>
<dbReference type="eggNOG" id="COG3176">
    <property type="taxonomic scope" value="Bacteria"/>
</dbReference>
<dbReference type="HOGENOM" id="CLU_033329_0_0_10"/>
<dbReference type="BioCyc" id="BVUL435590:G1G59-1471-MONOMER"/>
<dbReference type="BioCyc" id="MetaCyc:MONOMER-20489"/>
<dbReference type="Proteomes" id="UP000002861">
    <property type="component" value="Chromosome"/>
</dbReference>
<dbReference type="GO" id="GO:0016746">
    <property type="term" value="F:acyltransferase activity"/>
    <property type="evidence" value="ECO:0007669"/>
    <property type="project" value="UniProtKB-KW"/>
</dbReference>
<dbReference type="GO" id="GO:0006629">
    <property type="term" value="P:lipid metabolic process"/>
    <property type="evidence" value="ECO:0007669"/>
    <property type="project" value="UniProtKB-KW"/>
</dbReference>
<dbReference type="InterPro" id="IPR016181">
    <property type="entry name" value="Acyl_CoA_acyltransferase"/>
</dbReference>
<dbReference type="InterPro" id="IPR052351">
    <property type="entry name" value="Ornithine_N-alpha-AT"/>
</dbReference>
<dbReference type="PANTHER" id="PTHR37323">
    <property type="entry name" value="GCN5-RELATED N-ACETYLTRANSFERASE"/>
    <property type="match status" value="1"/>
</dbReference>
<dbReference type="PANTHER" id="PTHR37323:SF1">
    <property type="entry name" value="L-ORNITHINE N(ALPHA)-ACYLTRANSFERASE"/>
    <property type="match status" value="1"/>
</dbReference>
<dbReference type="Pfam" id="PF13444">
    <property type="entry name" value="Acetyltransf_5"/>
    <property type="match status" value="1"/>
</dbReference>
<dbReference type="SUPFAM" id="SSF55729">
    <property type="entry name" value="Acyl-CoA N-acyltransferases (Nat)"/>
    <property type="match status" value="1"/>
</dbReference>
<protein>
    <recommendedName>
        <fullName evidence="9">Glycine N(alpha)-acyltransferase</fullName>
        <ecNumber evidence="9">2.3.2.-</ecNumber>
    </recommendedName>
    <alternativeName>
        <fullName evidence="6">Glycine N-acyltransferase</fullName>
    </alternativeName>
</protein>
<keyword id="KW-0012">Acyltransferase</keyword>
<keyword id="KW-0444">Lipid biosynthesis</keyword>
<keyword id="KW-0443">Lipid metabolism</keyword>
<keyword id="KW-0808">Transferase</keyword>
<evidence type="ECO:0000269" key="1">
    <source>
    </source>
</evidence>
<evidence type="ECO:0000269" key="2">
    <source>
    </source>
</evidence>
<evidence type="ECO:0000269" key="3">
    <source>
    </source>
</evidence>
<evidence type="ECO:0000303" key="4">
    <source>
    </source>
</evidence>
<evidence type="ECO:0000303" key="5">
    <source>
    </source>
</evidence>
<evidence type="ECO:0000303" key="6">
    <source>
    </source>
</evidence>
<evidence type="ECO:0000305" key="7"/>
<evidence type="ECO:0000305" key="8">
    <source>
    </source>
</evidence>
<evidence type="ECO:0000305" key="9">
    <source>
    </source>
</evidence>
<evidence type="ECO:0000312" key="10">
    <source>
        <dbReference type="EMBL" id="ABR39095.1"/>
    </source>
</evidence>